<protein>
    <recommendedName>
        <fullName evidence="1">NADH-quinone oxidoreductase subunit B 2</fullName>
        <ecNumber evidence="1">7.1.1.-</ecNumber>
    </recommendedName>
    <alternativeName>
        <fullName evidence="1">NADH dehydrogenase I subunit B 2</fullName>
    </alternativeName>
    <alternativeName>
        <fullName evidence="1">NDH-1 subunit B 2</fullName>
    </alternativeName>
</protein>
<proteinExistence type="inferred from homology"/>
<feature type="chain" id="PRO_0000376121" description="NADH-quinone oxidoreductase subunit B 2">
    <location>
        <begin position="1"/>
        <end position="182"/>
    </location>
</feature>
<feature type="binding site" evidence="1">
    <location>
        <position position="47"/>
    </location>
    <ligand>
        <name>[4Fe-4S] cluster</name>
        <dbReference type="ChEBI" id="CHEBI:49883"/>
    </ligand>
</feature>
<feature type="binding site" evidence="1">
    <location>
        <position position="48"/>
    </location>
    <ligand>
        <name>[4Fe-4S] cluster</name>
        <dbReference type="ChEBI" id="CHEBI:49883"/>
    </ligand>
</feature>
<feature type="binding site" evidence="1">
    <location>
        <position position="113"/>
    </location>
    <ligand>
        <name>[4Fe-4S] cluster</name>
        <dbReference type="ChEBI" id="CHEBI:49883"/>
    </ligand>
</feature>
<feature type="binding site" evidence="1">
    <location>
        <position position="142"/>
    </location>
    <ligand>
        <name>[4Fe-4S] cluster</name>
        <dbReference type="ChEBI" id="CHEBI:49883"/>
    </ligand>
</feature>
<sequence length="182" mass="20090">MASELDGLPVIATRREEAEGFLQGLVSKSLGWARKYSLFTYPFVTACCGMEYMTMASARYDSDRFGAAMPRFSPRQADLLMVVGTVNCKQAPILQRVYEQMADPKWVMAFGVCASSGGFYDNYATVQGIDRVIPVDVYVPGCPPRPEQVLDGIMLLQKKIQNQSHKLIDRKPLPVISGGAGR</sequence>
<comment type="function">
    <text evidence="1">NDH-1 shuttles electrons from NADH, via FMN and iron-sulfur (Fe-S) centers, to quinones in the respiratory chain. The immediate electron acceptor for the enzyme in this species is believed to be ubiquinone. Couples the redox reaction to proton translocation (for every two electrons transferred, four hydrogen ions are translocated across the cytoplasmic membrane), and thus conserves the redox energy in a proton gradient.</text>
</comment>
<comment type="catalytic activity">
    <reaction evidence="1">
        <text>a quinone + NADH + 5 H(+)(in) = a quinol + NAD(+) + 4 H(+)(out)</text>
        <dbReference type="Rhea" id="RHEA:57888"/>
        <dbReference type="ChEBI" id="CHEBI:15378"/>
        <dbReference type="ChEBI" id="CHEBI:24646"/>
        <dbReference type="ChEBI" id="CHEBI:57540"/>
        <dbReference type="ChEBI" id="CHEBI:57945"/>
        <dbReference type="ChEBI" id="CHEBI:132124"/>
    </reaction>
</comment>
<comment type="cofactor">
    <cofactor evidence="1">
        <name>[4Fe-4S] cluster</name>
        <dbReference type="ChEBI" id="CHEBI:49883"/>
    </cofactor>
    <text evidence="1">Binds 1 [4Fe-4S] cluster.</text>
</comment>
<comment type="subunit">
    <text evidence="1">NDH-1 is composed of 14 different subunits. Subunits NuoB, C, D, E, F, and G constitute the peripheral sector of the complex.</text>
</comment>
<comment type="subcellular location">
    <subcellularLocation>
        <location evidence="1">Cell inner membrane</location>
        <topology evidence="1">Peripheral membrane protein</topology>
        <orientation evidence="1">Cytoplasmic side</orientation>
    </subcellularLocation>
</comment>
<comment type="similarity">
    <text evidence="1">Belongs to the complex I 20 kDa subunit family.</text>
</comment>
<keyword id="KW-0004">4Fe-4S</keyword>
<keyword id="KW-0997">Cell inner membrane</keyword>
<keyword id="KW-1003">Cell membrane</keyword>
<keyword id="KW-0408">Iron</keyword>
<keyword id="KW-0411">Iron-sulfur</keyword>
<keyword id="KW-0472">Membrane</keyword>
<keyword id="KW-0479">Metal-binding</keyword>
<keyword id="KW-0520">NAD</keyword>
<keyword id="KW-0874">Quinone</keyword>
<keyword id="KW-1278">Translocase</keyword>
<keyword id="KW-0813">Transport</keyword>
<keyword id="KW-0830">Ubiquinone</keyword>
<name>NUOB2_ANASK</name>
<gene>
    <name evidence="1" type="primary">nuoB2</name>
    <name type="ordered locus">AnaeK_1279</name>
</gene>
<accession>B4UIA7</accession>
<reference key="1">
    <citation type="submission" date="2008-08" db="EMBL/GenBank/DDBJ databases">
        <title>Complete sequence of Anaeromyxobacter sp. K.</title>
        <authorList>
            <consortium name="US DOE Joint Genome Institute"/>
            <person name="Lucas S."/>
            <person name="Copeland A."/>
            <person name="Lapidus A."/>
            <person name="Glavina del Rio T."/>
            <person name="Dalin E."/>
            <person name="Tice H."/>
            <person name="Bruce D."/>
            <person name="Goodwin L."/>
            <person name="Pitluck S."/>
            <person name="Saunders E."/>
            <person name="Brettin T."/>
            <person name="Detter J.C."/>
            <person name="Han C."/>
            <person name="Larimer F."/>
            <person name="Land M."/>
            <person name="Hauser L."/>
            <person name="Kyrpides N."/>
            <person name="Ovchinnikiva G."/>
            <person name="Beliaev A."/>
        </authorList>
    </citation>
    <scope>NUCLEOTIDE SEQUENCE [LARGE SCALE GENOMIC DNA]</scope>
    <source>
        <strain>K</strain>
    </source>
</reference>
<evidence type="ECO:0000255" key="1">
    <source>
        <dbReference type="HAMAP-Rule" id="MF_01356"/>
    </source>
</evidence>
<organism>
    <name type="scientific">Anaeromyxobacter sp. (strain K)</name>
    <dbReference type="NCBI Taxonomy" id="447217"/>
    <lineage>
        <taxon>Bacteria</taxon>
        <taxon>Pseudomonadati</taxon>
        <taxon>Myxococcota</taxon>
        <taxon>Myxococcia</taxon>
        <taxon>Myxococcales</taxon>
        <taxon>Cystobacterineae</taxon>
        <taxon>Anaeromyxobacteraceae</taxon>
        <taxon>Anaeromyxobacter</taxon>
    </lineage>
</organism>
<dbReference type="EC" id="7.1.1.-" evidence="1"/>
<dbReference type="EMBL" id="CP001131">
    <property type="protein sequence ID" value="ACG72512.1"/>
    <property type="molecule type" value="Genomic_DNA"/>
</dbReference>
<dbReference type="RefSeq" id="WP_012525336.1">
    <property type="nucleotide sequence ID" value="NC_011145.1"/>
</dbReference>
<dbReference type="SMR" id="B4UIA7"/>
<dbReference type="KEGG" id="ank:AnaeK_1279"/>
<dbReference type="HOGENOM" id="CLU_055737_7_3_7"/>
<dbReference type="OrthoDB" id="9786737at2"/>
<dbReference type="Proteomes" id="UP000001871">
    <property type="component" value="Chromosome"/>
</dbReference>
<dbReference type="GO" id="GO:0005886">
    <property type="term" value="C:plasma membrane"/>
    <property type="evidence" value="ECO:0007669"/>
    <property type="project" value="UniProtKB-SubCell"/>
</dbReference>
<dbReference type="GO" id="GO:0045271">
    <property type="term" value="C:respiratory chain complex I"/>
    <property type="evidence" value="ECO:0007669"/>
    <property type="project" value="TreeGrafter"/>
</dbReference>
<dbReference type="GO" id="GO:0051539">
    <property type="term" value="F:4 iron, 4 sulfur cluster binding"/>
    <property type="evidence" value="ECO:0007669"/>
    <property type="project" value="UniProtKB-KW"/>
</dbReference>
<dbReference type="GO" id="GO:0005506">
    <property type="term" value="F:iron ion binding"/>
    <property type="evidence" value="ECO:0007669"/>
    <property type="project" value="UniProtKB-UniRule"/>
</dbReference>
<dbReference type="GO" id="GO:0008137">
    <property type="term" value="F:NADH dehydrogenase (ubiquinone) activity"/>
    <property type="evidence" value="ECO:0007669"/>
    <property type="project" value="InterPro"/>
</dbReference>
<dbReference type="GO" id="GO:0050136">
    <property type="term" value="F:NADH:ubiquinone reductase (non-electrogenic) activity"/>
    <property type="evidence" value="ECO:0007669"/>
    <property type="project" value="UniProtKB-UniRule"/>
</dbReference>
<dbReference type="GO" id="GO:0048038">
    <property type="term" value="F:quinone binding"/>
    <property type="evidence" value="ECO:0007669"/>
    <property type="project" value="UniProtKB-KW"/>
</dbReference>
<dbReference type="GO" id="GO:0009060">
    <property type="term" value="P:aerobic respiration"/>
    <property type="evidence" value="ECO:0007669"/>
    <property type="project" value="TreeGrafter"/>
</dbReference>
<dbReference type="GO" id="GO:0015990">
    <property type="term" value="P:electron transport coupled proton transport"/>
    <property type="evidence" value="ECO:0007669"/>
    <property type="project" value="TreeGrafter"/>
</dbReference>
<dbReference type="FunFam" id="3.40.50.12280:FF:000002">
    <property type="entry name" value="NADH-quinone oxidoreductase subunit B"/>
    <property type="match status" value="1"/>
</dbReference>
<dbReference type="Gene3D" id="3.40.50.12280">
    <property type="match status" value="1"/>
</dbReference>
<dbReference type="HAMAP" id="MF_01356">
    <property type="entry name" value="NDH1_NuoB"/>
    <property type="match status" value="1"/>
</dbReference>
<dbReference type="InterPro" id="IPR006137">
    <property type="entry name" value="NADH_UbQ_OxRdtase-like_20kDa"/>
</dbReference>
<dbReference type="InterPro" id="IPR006138">
    <property type="entry name" value="NADH_UQ_OxRdtase_20Kd_su"/>
</dbReference>
<dbReference type="NCBIfam" id="TIGR01957">
    <property type="entry name" value="nuoB_fam"/>
    <property type="match status" value="1"/>
</dbReference>
<dbReference type="NCBIfam" id="NF005012">
    <property type="entry name" value="PRK06411.1"/>
    <property type="match status" value="1"/>
</dbReference>
<dbReference type="NCBIfam" id="NF011392">
    <property type="entry name" value="PRK14817.1"/>
    <property type="match status" value="1"/>
</dbReference>
<dbReference type="PANTHER" id="PTHR11995">
    <property type="entry name" value="NADH DEHYDROGENASE"/>
    <property type="match status" value="1"/>
</dbReference>
<dbReference type="PANTHER" id="PTHR11995:SF14">
    <property type="entry name" value="NADH DEHYDROGENASE [UBIQUINONE] IRON-SULFUR PROTEIN 7, MITOCHONDRIAL"/>
    <property type="match status" value="1"/>
</dbReference>
<dbReference type="Pfam" id="PF01058">
    <property type="entry name" value="Oxidored_q6"/>
    <property type="match status" value="1"/>
</dbReference>
<dbReference type="SUPFAM" id="SSF56770">
    <property type="entry name" value="HydA/Nqo6-like"/>
    <property type="match status" value="1"/>
</dbReference>
<dbReference type="PROSITE" id="PS01150">
    <property type="entry name" value="COMPLEX1_20K"/>
    <property type="match status" value="1"/>
</dbReference>